<reference key="1">
    <citation type="journal article" date="2004" name="Proc. Natl. Acad. Sci. U.S.A.">
        <title>The louse-borne human pathogen Bartonella quintana is a genomic derivative of the zoonotic agent Bartonella henselae.</title>
        <authorList>
            <person name="Alsmark U.C.M."/>
            <person name="Frank A.C."/>
            <person name="Karlberg E.O."/>
            <person name="Legault B.-A."/>
            <person name="Ardell D.H."/>
            <person name="Canbaeck B."/>
            <person name="Eriksson A.-S."/>
            <person name="Naeslund A.K."/>
            <person name="Handley S.A."/>
            <person name="Huvet M."/>
            <person name="La Scola B."/>
            <person name="Holmberg M."/>
            <person name="Andersson S.G.E."/>
        </authorList>
    </citation>
    <scope>NUCLEOTIDE SEQUENCE [LARGE SCALE GENOMIC DNA]</scope>
    <source>
        <strain>ATCC 49882 / DSM 28221 / CCUG 30454 / Houston 1</strain>
    </source>
</reference>
<proteinExistence type="inferred from homology"/>
<sequence length="324" mass="34771">MIRSVVRGIGGALPKKSLSNDDIAKFVETSDSWIVQRTGIRQRYIANEKETTVSLGVEAAQAALINAGLTIKDIDCIILATSTPNHTFPASAVEIQHALGMSHGFAFDIQAVCSGFIFALTTGDAYLRCGTAKRILVIGSDTFSRILDWQDRTTCVLFGDGAGAAVLEAQEIERGVASDHGILSTKLRSNGAYMDKLYVDGGPSTTQKTGYLRMEGREVFKYAVGMITDVVDECFAAAGMDSSQLDWFVPHQANKRIIEASAKKLGISIDKVVITVDRHGNTSAASVPLALTMAICDGKIKKGDLVMLEAMGGGFTWGAILIRW</sequence>
<comment type="function">
    <text evidence="1">Catalyzes the condensation reaction of fatty acid synthesis by the addition to an acyl acceptor of two carbons from malonyl-ACP. Catalyzes the first condensation reaction which initiates fatty acid synthesis and may therefore play a role in governing the total rate of fatty acid production. Possesses both acetoacetyl-ACP synthase and acetyl transacylase activities. Its substrate specificity determines the biosynthesis of branched-chain and/or straight-chain of fatty acids.</text>
</comment>
<comment type="catalytic activity">
    <reaction evidence="1">
        <text>malonyl-[ACP] + acetyl-CoA + H(+) = 3-oxobutanoyl-[ACP] + CO2 + CoA</text>
        <dbReference type="Rhea" id="RHEA:12080"/>
        <dbReference type="Rhea" id="RHEA-COMP:9623"/>
        <dbReference type="Rhea" id="RHEA-COMP:9625"/>
        <dbReference type="ChEBI" id="CHEBI:15378"/>
        <dbReference type="ChEBI" id="CHEBI:16526"/>
        <dbReference type="ChEBI" id="CHEBI:57287"/>
        <dbReference type="ChEBI" id="CHEBI:57288"/>
        <dbReference type="ChEBI" id="CHEBI:78449"/>
        <dbReference type="ChEBI" id="CHEBI:78450"/>
        <dbReference type="EC" id="2.3.1.180"/>
    </reaction>
</comment>
<comment type="pathway">
    <text evidence="1">Lipid metabolism; fatty acid biosynthesis.</text>
</comment>
<comment type="subunit">
    <text evidence="1">Homodimer.</text>
</comment>
<comment type="subcellular location">
    <subcellularLocation>
        <location evidence="1">Cytoplasm</location>
    </subcellularLocation>
</comment>
<comment type="domain">
    <text evidence="1">The last Arg residue of the ACP-binding site is essential for the weak association between ACP/AcpP and FabH.</text>
</comment>
<comment type="similarity">
    <text evidence="1">Belongs to the thiolase-like superfamily. FabH family.</text>
</comment>
<keyword id="KW-0012">Acyltransferase</keyword>
<keyword id="KW-0963">Cytoplasm</keyword>
<keyword id="KW-0275">Fatty acid biosynthesis</keyword>
<keyword id="KW-0276">Fatty acid metabolism</keyword>
<keyword id="KW-0444">Lipid biosynthesis</keyword>
<keyword id="KW-0443">Lipid metabolism</keyword>
<keyword id="KW-0511">Multifunctional enzyme</keyword>
<keyword id="KW-0808">Transferase</keyword>
<gene>
    <name evidence="1" type="primary">fabH</name>
    <name type="ordered locus">BH07630</name>
</gene>
<feature type="chain" id="PRO_1000187842" description="Beta-ketoacyl-[acyl-carrier-protein] synthase III">
    <location>
        <begin position="1"/>
        <end position="324"/>
    </location>
</feature>
<feature type="region of interest" description="ACP-binding" evidence="1">
    <location>
        <begin position="252"/>
        <end position="256"/>
    </location>
</feature>
<feature type="active site" evidence="1">
    <location>
        <position position="113"/>
    </location>
</feature>
<feature type="active site" evidence="1">
    <location>
        <position position="251"/>
    </location>
</feature>
<feature type="active site" evidence="1">
    <location>
        <position position="281"/>
    </location>
</feature>
<name>FABH_BARHE</name>
<protein>
    <recommendedName>
        <fullName evidence="1">Beta-ketoacyl-[acyl-carrier-protein] synthase III</fullName>
        <shortName evidence="1">Beta-ketoacyl-ACP synthase III</shortName>
        <shortName evidence="1">KAS III</shortName>
        <ecNumber evidence="1">2.3.1.180</ecNumber>
    </recommendedName>
    <alternativeName>
        <fullName evidence="1">3-oxoacyl-[acyl-carrier-protein] synthase 3</fullName>
    </alternativeName>
    <alternativeName>
        <fullName evidence="1">3-oxoacyl-[acyl-carrier-protein] synthase III</fullName>
    </alternativeName>
</protein>
<evidence type="ECO:0000255" key="1">
    <source>
        <dbReference type="HAMAP-Rule" id="MF_01815"/>
    </source>
</evidence>
<organism>
    <name type="scientific">Bartonella henselae (strain ATCC 49882 / DSM 28221 / CCUG 30454 / Houston 1)</name>
    <name type="common">Rochalimaea henselae</name>
    <dbReference type="NCBI Taxonomy" id="283166"/>
    <lineage>
        <taxon>Bacteria</taxon>
        <taxon>Pseudomonadati</taxon>
        <taxon>Pseudomonadota</taxon>
        <taxon>Alphaproteobacteria</taxon>
        <taxon>Hyphomicrobiales</taxon>
        <taxon>Bartonellaceae</taxon>
        <taxon>Bartonella</taxon>
    </lineage>
</organism>
<dbReference type="EC" id="2.3.1.180" evidence="1"/>
<dbReference type="EMBL" id="BX897699">
    <property type="protein sequence ID" value="CAF27564.1"/>
    <property type="molecule type" value="Genomic_DNA"/>
</dbReference>
<dbReference type="RefSeq" id="WP_011180665.1">
    <property type="nucleotide sequence ID" value="NZ_LRIJ02000001.1"/>
</dbReference>
<dbReference type="SMR" id="Q6G3K4"/>
<dbReference type="PaxDb" id="283166-BH07630"/>
<dbReference type="EnsemblBacteria" id="CAF27564">
    <property type="protein sequence ID" value="CAF27564"/>
    <property type="gene ID" value="BH07630"/>
</dbReference>
<dbReference type="KEGG" id="bhe:BH07630"/>
<dbReference type="eggNOG" id="COG0332">
    <property type="taxonomic scope" value="Bacteria"/>
</dbReference>
<dbReference type="OrthoDB" id="9815506at2"/>
<dbReference type="UniPathway" id="UPA00094"/>
<dbReference type="Proteomes" id="UP000000421">
    <property type="component" value="Chromosome"/>
</dbReference>
<dbReference type="GO" id="GO:0005737">
    <property type="term" value="C:cytoplasm"/>
    <property type="evidence" value="ECO:0007669"/>
    <property type="project" value="UniProtKB-SubCell"/>
</dbReference>
<dbReference type="GO" id="GO:0004315">
    <property type="term" value="F:3-oxoacyl-[acyl-carrier-protein] synthase activity"/>
    <property type="evidence" value="ECO:0007669"/>
    <property type="project" value="InterPro"/>
</dbReference>
<dbReference type="GO" id="GO:0033818">
    <property type="term" value="F:beta-ketoacyl-acyl-carrier-protein synthase III activity"/>
    <property type="evidence" value="ECO:0007669"/>
    <property type="project" value="UniProtKB-UniRule"/>
</dbReference>
<dbReference type="GO" id="GO:0006633">
    <property type="term" value="P:fatty acid biosynthetic process"/>
    <property type="evidence" value="ECO:0007669"/>
    <property type="project" value="UniProtKB-UniRule"/>
</dbReference>
<dbReference type="GO" id="GO:0044550">
    <property type="term" value="P:secondary metabolite biosynthetic process"/>
    <property type="evidence" value="ECO:0007669"/>
    <property type="project" value="TreeGrafter"/>
</dbReference>
<dbReference type="CDD" id="cd00830">
    <property type="entry name" value="KAS_III"/>
    <property type="match status" value="1"/>
</dbReference>
<dbReference type="FunFam" id="3.40.47.10:FF:000004">
    <property type="entry name" value="3-oxoacyl-[acyl-carrier-protein] synthase 3"/>
    <property type="match status" value="1"/>
</dbReference>
<dbReference type="Gene3D" id="3.40.47.10">
    <property type="match status" value="1"/>
</dbReference>
<dbReference type="HAMAP" id="MF_01815">
    <property type="entry name" value="FabH"/>
    <property type="match status" value="1"/>
</dbReference>
<dbReference type="InterPro" id="IPR013747">
    <property type="entry name" value="ACP_syn_III_C"/>
</dbReference>
<dbReference type="InterPro" id="IPR013751">
    <property type="entry name" value="ACP_syn_III_N"/>
</dbReference>
<dbReference type="InterPro" id="IPR004655">
    <property type="entry name" value="FabH"/>
</dbReference>
<dbReference type="InterPro" id="IPR016039">
    <property type="entry name" value="Thiolase-like"/>
</dbReference>
<dbReference type="NCBIfam" id="TIGR00747">
    <property type="entry name" value="fabH"/>
    <property type="match status" value="1"/>
</dbReference>
<dbReference type="NCBIfam" id="NF006829">
    <property type="entry name" value="PRK09352.1"/>
    <property type="match status" value="1"/>
</dbReference>
<dbReference type="PANTHER" id="PTHR34069">
    <property type="entry name" value="3-OXOACYL-[ACYL-CARRIER-PROTEIN] SYNTHASE 3"/>
    <property type="match status" value="1"/>
</dbReference>
<dbReference type="PANTHER" id="PTHR34069:SF2">
    <property type="entry name" value="BETA-KETOACYL-[ACYL-CARRIER-PROTEIN] SYNTHASE III"/>
    <property type="match status" value="1"/>
</dbReference>
<dbReference type="Pfam" id="PF08545">
    <property type="entry name" value="ACP_syn_III"/>
    <property type="match status" value="1"/>
</dbReference>
<dbReference type="Pfam" id="PF08541">
    <property type="entry name" value="ACP_syn_III_C"/>
    <property type="match status" value="1"/>
</dbReference>
<dbReference type="SUPFAM" id="SSF53901">
    <property type="entry name" value="Thiolase-like"/>
    <property type="match status" value="1"/>
</dbReference>
<accession>Q6G3K4</accession>